<sequence>MTEDNIAPITSVKVVTDKCTYKDNELLTKYSYENAVVTKTASGRFDVTPTVQDYVFKLDLKKPEKLGIMLIGLGGNNGSTLVASVLANKHNVEFQTKEGVKQPNYFGSMTQCSTLKLGIDAEGNDVYAPFNSLLPMVSPNDFVVSGWDINNADLYEAMQRSQVLEYDLQQRLKAKMSLVKPLPSIYYPDFIAANQDERANNCINLDEKGNVTTRGKWTHLQRIRRDIQNFKEENALDKVIVLWTANTERYVEVSPGVNDTMENLLQSIKNDHEEIAPSTIFAAASILEGVPYINGSPQNTFVPGLVQLAEHEGTFIAGDDLKSGQTKLKSVLAQFLVDAGIKPVSIASYNHLGNNDGYNLSAPKQFRSKEISKSSVIDDIIASNDILYNDKLGKKVDHCIVIKYMKPVGDSKVAMDEYYSELMLGGHNRISIHNVCEDSLLATPLIIDLLVMTEFCTRVSYKKVDPVKEDAGKFENFYPVLTFLSYWLKAPLTRPGFHPVNGLNKQRTALENFLRLLIGLPSQNELRFEERLL</sequence>
<proteinExistence type="evidence at protein level"/>
<accession>P11986</accession>
<accession>D6VW34</accession>
<comment type="function">
    <text evidence="1 6 8 10 11">Key enzyme in myo-inositol biosynthesis pathway that catalyzes the conversion of glucose 6-phosphate to 1-myo-inositol 1-phosphate in a NAD-dependent manner (PubMed:14684747, PubMed:23902760, Ref.6, Ref.8). Rate-limiting enzyme in the synthesis of all inositol-containing compounds (By similarity).</text>
</comment>
<comment type="catalytic activity">
    <reaction evidence="6 8 10 11">
        <text>D-glucose 6-phosphate = 1D-myo-inositol 3-phosphate</text>
        <dbReference type="Rhea" id="RHEA:10716"/>
        <dbReference type="ChEBI" id="CHEBI:58401"/>
        <dbReference type="ChEBI" id="CHEBI:61548"/>
        <dbReference type="EC" id="5.5.1.4"/>
    </reaction>
</comment>
<comment type="cofactor">
    <cofactor evidence="2 3 4 6 10">
        <name>NAD(+)</name>
        <dbReference type="ChEBI" id="CHEBI:57540"/>
    </cofactor>
</comment>
<comment type="activity regulation">
    <text evidence="10 11 14">Competitively inhibited by myo-2-inosose 1-phosphate, which is also an intermediate in the catalytic reaction (Ref.6). Competitively inhibited by 2-deoxy-myo-inositol 1-phosphate (dMIP), 1-deoxy-1-(phosphonomethyl)-myo-2-inosose (DPMI), dihydroxyacetone phosphate (DHAP), 6-deoxy-D-glucose 6-(E)-vinylhomophosphonate, 6-deoxy-D-glucitol 6-(E)-vinylhomophosphonate, 2,6-dideoxy-D-glucose 6-(E)-vinylhomophosphonate and 2,6-dideoxy-D-glucitol 6-(E)-vinylhomophosphonate (Ref.6, Ref.8). Inhibited by 2-deoxyglucitol 6-phosphate (dgtolP) (Probable).</text>
</comment>
<comment type="biophysicochemical properties">
    <kinetics>
        <KM evidence="10">1.2 mM for D-glucose 6-phosphate (at 37 degrees Celsius and pH 7.2)</KM>
        <KM evidence="10">17 uM for NAD (at 37 degrees Celsius and pH 7.2)</KM>
    </kinetics>
    <phDependence>
        <text evidence="6">Optimum pH is 7.2-7.7.</text>
    </phDependence>
</comment>
<comment type="pathway">
    <text>Polyol metabolism; myo-inositol biosynthesis; myo-inositol from D-glucose 6-phosphate: step 1/2.</text>
</comment>
<comment type="subunit">
    <text evidence="2 4">Homotetramer.</text>
</comment>
<comment type="subcellular location">
    <subcellularLocation>
        <location evidence="5">Cytoplasm</location>
    </subcellularLocation>
</comment>
<comment type="induction">
    <text evidence="7 9">Induced by valproate (PubMed:15576064). Repressed by inositol (PubMed:15576064, PubMed:9294443).</text>
</comment>
<comment type="PTM">
    <text evidence="8">Phosphorylation at Ser-184 and Ser-374 is associated with a decrease in activity (PubMed:23902760). Increasingly phosphorylated in presence of valproate (PubMed:23902760).</text>
</comment>
<comment type="disruption phenotype">
    <text evidence="8">Inositol auxotrophy.</text>
</comment>
<comment type="similarity">
    <text evidence="13">Belongs to the myo-inositol 1-phosphate synthase family.</text>
</comment>
<comment type="sequence caution" evidence="13">
    <conflict type="erroneous initiation">
        <sequence resource="EMBL-CDS" id="CAA60802"/>
    </conflict>
</comment>
<comment type="sequence caution" evidence="13">
    <conflict type="erroneous initiation">
        <sequence resource="EMBL-CDS" id="CAA89448"/>
    </conflict>
</comment>
<keyword id="KW-0002">3D-structure</keyword>
<keyword id="KW-0963">Cytoplasm</keyword>
<keyword id="KW-0903">Direct protein sequencing</keyword>
<keyword id="KW-0398">Inositol biosynthesis</keyword>
<keyword id="KW-0413">Isomerase</keyword>
<keyword id="KW-0444">Lipid biosynthesis</keyword>
<keyword id="KW-0443">Lipid metabolism</keyword>
<keyword id="KW-0520">NAD</keyword>
<keyword id="KW-0594">Phospholipid biosynthesis</keyword>
<keyword id="KW-1208">Phospholipid metabolism</keyword>
<keyword id="KW-0597">Phosphoprotein</keyword>
<keyword id="KW-1185">Reference proteome</keyword>
<gene>
    <name type="primary">INO1</name>
    <name type="ordered locus">YJL153C</name>
    <name type="ORF">J0610</name>
</gene>
<dbReference type="EC" id="5.5.1.4" evidence="6 8 10 11"/>
<dbReference type="EMBL" id="L23520">
    <property type="protein sequence ID" value="AAA34706.1"/>
    <property type="molecule type" value="Genomic_DNA"/>
</dbReference>
<dbReference type="EMBL" id="J04453">
    <property type="protein sequence ID" value="AAA66310.1"/>
    <property type="molecule type" value="Genomic_DNA"/>
</dbReference>
<dbReference type="EMBL" id="X87371">
    <property type="protein sequence ID" value="CAA60802.1"/>
    <property type="status" value="ALT_INIT"/>
    <property type="molecule type" value="Genomic_DNA"/>
</dbReference>
<dbReference type="EMBL" id="Z49428">
    <property type="protein sequence ID" value="CAA89448.1"/>
    <property type="status" value="ALT_INIT"/>
    <property type="molecule type" value="Genomic_DNA"/>
</dbReference>
<dbReference type="EMBL" id="BK006943">
    <property type="protein sequence ID" value="DAA08650.1"/>
    <property type="molecule type" value="Genomic_DNA"/>
</dbReference>
<dbReference type="PIR" id="S55160">
    <property type="entry name" value="A30902"/>
</dbReference>
<dbReference type="RefSeq" id="NP_012382.2">
    <property type="nucleotide sequence ID" value="NM_001181586.1"/>
</dbReference>
<dbReference type="PDB" id="1JKF">
    <property type="method" value="X-ray"/>
    <property type="resolution" value="2.40 A"/>
    <property type="chains" value="A/B=1-533"/>
</dbReference>
<dbReference type="PDB" id="1JKI">
    <property type="method" value="X-ray"/>
    <property type="resolution" value="2.20 A"/>
    <property type="chains" value="A/B=1-533"/>
</dbReference>
<dbReference type="PDB" id="1LA2">
    <property type="method" value="X-ray"/>
    <property type="resolution" value="2.65 A"/>
    <property type="chains" value="A/B/C/D=1-533"/>
</dbReference>
<dbReference type="PDB" id="1P1F">
    <property type="method" value="X-ray"/>
    <property type="resolution" value="2.60 A"/>
    <property type="chains" value="A/B=1-533"/>
</dbReference>
<dbReference type="PDB" id="1P1H">
    <property type="method" value="X-ray"/>
    <property type="resolution" value="1.95 A"/>
    <property type="chains" value="A/B/C/D=1-533"/>
</dbReference>
<dbReference type="PDB" id="1P1I">
    <property type="method" value="X-ray"/>
    <property type="resolution" value="2.40 A"/>
    <property type="chains" value="A/B=1-533"/>
</dbReference>
<dbReference type="PDB" id="1P1J">
    <property type="method" value="X-ray"/>
    <property type="resolution" value="1.70 A"/>
    <property type="chains" value="A/B=1-533"/>
</dbReference>
<dbReference type="PDB" id="1P1K">
    <property type="method" value="X-ray"/>
    <property type="resolution" value="2.10 A"/>
    <property type="chains" value="A/B=1-533"/>
</dbReference>
<dbReference type="PDB" id="1RM0">
    <property type="method" value="X-ray"/>
    <property type="resolution" value="2.05 A"/>
    <property type="chains" value="A/B=1-533"/>
</dbReference>
<dbReference type="PDBsum" id="1JKF"/>
<dbReference type="PDBsum" id="1JKI"/>
<dbReference type="PDBsum" id="1LA2"/>
<dbReference type="PDBsum" id="1P1F"/>
<dbReference type="PDBsum" id="1P1H"/>
<dbReference type="PDBsum" id="1P1I"/>
<dbReference type="PDBsum" id="1P1J"/>
<dbReference type="PDBsum" id="1P1K"/>
<dbReference type="PDBsum" id="1RM0"/>
<dbReference type="SMR" id="P11986"/>
<dbReference type="BioGRID" id="33607">
    <property type="interactions" value="108"/>
</dbReference>
<dbReference type="DIP" id="DIP-5687N"/>
<dbReference type="FunCoup" id="P11986">
    <property type="interactions" value="921"/>
</dbReference>
<dbReference type="IntAct" id="P11986">
    <property type="interactions" value="29"/>
</dbReference>
<dbReference type="MINT" id="P11986"/>
<dbReference type="STRING" id="4932.YJL153C"/>
<dbReference type="iPTMnet" id="P11986"/>
<dbReference type="PaxDb" id="4932-YJL153C"/>
<dbReference type="PeptideAtlas" id="P11986"/>
<dbReference type="EnsemblFungi" id="YJL153C_mRNA">
    <property type="protein sequence ID" value="YJL153C"/>
    <property type="gene ID" value="YJL153C"/>
</dbReference>
<dbReference type="GeneID" id="853288"/>
<dbReference type="KEGG" id="sce:YJL153C"/>
<dbReference type="AGR" id="SGD:S000003689"/>
<dbReference type="SGD" id="S000003689">
    <property type="gene designation" value="INO1"/>
</dbReference>
<dbReference type="VEuPathDB" id="FungiDB:YJL153C"/>
<dbReference type="eggNOG" id="KOG0693">
    <property type="taxonomic scope" value="Eukaryota"/>
</dbReference>
<dbReference type="GeneTree" id="ENSGT00390000018395"/>
<dbReference type="HOGENOM" id="CLU_021486_2_0_1"/>
<dbReference type="InParanoid" id="P11986"/>
<dbReference type="OMA" id="VYVPMKE"/>
<dbReference type="OrthoDB" id="2887at2759"/>
<dbReference type="BioCyc" id="YEAST:YJL153C-MONOMER"/>
<dbReference type="Reactome" id="R-SCE-1855183">
    <property type="pathway name" value="Synthesis of IP2, IP, and Ins in the cytosol"/>
</dbReference>
<dbReference type="SABIO-RK" id="P11986"/>
<dbReference type="UniPathway" id="UPA00823">
    <property type="reaction ID" value="UER00787"/>
</dbReference>
<dbReference type="BioGRID-ORCS" id="853288">
    <property type="hits" value="0 hits in 10 CRISPR screens"/>
</dbReference>
<dbReference type="EvolutionaryTrace" id="P11986"/>
<dbReference type="PRO" id="PR:P11986"/>
<dbReference type="Proteomes" id="UP000002311">
    <property type="component" value="Chromosome X"/>
</dbReference>
<dbReference type="RNAct" id="P11986">
    <property type="molecule type" value="protein"/>
</dbReference>
<dbReference type="GO" id="GO:0005737">
    <property type="term" value="C:cytoplasm"/>
    <property type="evidence" value="ECO:0000314"/>
    <property type="project" value="UniProtKB"/>
</dbReference>
<dbReference type="GO" id="GO:0004512">
    <property type="term" value="F:inositol-3-phosphate synthase activity"/>
    <property type="evidence" value="ECO:0000314"/>
    <property type="project" value="UniProtKB"/>
</dbReference>
<dbReference type="GO" id="GO:0006021">
    <property type="term" value="P:inositol biosynthetic process"/>
    <property type="evidence" value="ECO:0000314"/>
    <property type="project" value="UniProtKB"/>
</dbReference>
<dbReference type="GO" id="GO:0008654">
    <property type="term" value="P:phospholipid biosynthetic process"/>
    <property type="evidence" value="ECO:0007669"/>
    <property type="project" value="UniProtKB-KW"/>
</dbReference>
<dbReference type="FunFam" id="3.40.50.720:FF:000334">
    <property type="entry name" value="Inositol-3-phosphate synthase"/>
    <property type="match status" value="1"/>
</dbReference>
<dbReference type="FunFam" id="3.40.50.720:FF:000069">
    <property type="entry name" value="Inositol-3-phosphate synthase 1"/>
    <property type="match status" value="1"/>
</dbReference>
<dbReference type="FunFam" id="3.30.360.10:FF:000055">
    <property type="entry name" value="Putative myo-inositol-1-phosphate synthase"/>
    <property type="match status" value="1"/>
</dbReference>
<dbReference type="Gene3D" id="3.40.50.720">
    <property type="entry name" value="NAD(P)-binding Rossmann-like Domain"/>
    <property type="match status" value="2"/>
</dbReference>
<dbReference type="InterPro" id="IPR002587">
    <property type="entry name" value="Myo-inos-1-P_Synthase"/>
</dbReference>
<dbReference type="InterPro" id="IPR013021">
    <property type="entry name" value="Myo-inos-1-P_Synthase_GAPDH"/>
</dbReference>
<dbReference type="InterPro" id="IPR036291">
    <property type="entry name" value="NAD(P)-bd_dom_sf"/>
</dbReference>
<dbReference type="PANTHER" id="PTHR11510">
    <property type="entry name" value="MYO-INOSITOL-1 PHOSPHATE SYNTHASE"/>
    <property type="match status" value="1"/>
</dbReference>
<dbReference type="Pfam" id="PF01658">
    <property type="entry name" value="Inos-1-P_synth"/>
    <property type="match status" value="1"/>
</dbReference>
<dbReference type="Pfam" id="PF07994">
    <property type="entry name" value="NAD_binding_5"/>
    <property type="match status" value="1"/>
</dbReference>
<dbReference type="PIRSF" id="PIRSF015578">
    <property type="entry name" value="Myoinos-ppht_syn"/>
    <property type="match status" value="1"/>
</dbReference>
<dbReference type="SUPFAM" id="SSF55347">
    <property type="entry name" value="Glyceraldehyde-3-phosphate dehydrogenase-like, C-terminal domain"/>
    <property type="match status" value="1"/>
</dbReference>
<dbReference type="SUPFAM" id="SSF51735">
    <property type="entry name" value="NAD(P)-binding Rossmann-fold domains"/>
    <property type="match status" value="1"/>
</dbReference>
<reference key="1">
    <citation type="journal article" date="1989" name="J. Biol. Chem.">
        <title>Biosynthesis of inositol in yeast. Primary structure of myo-inositol-1-phosphate synthase (EC 5.5.1.4) and functional analysis of its structural gene, the INO1 locus.</title>
        <authorList>
            <person name="Dean-Johnson M."/>
            <person name="Henry S.A."/>
        </authorList>
    </citation>
    <scope>NUCLEOTIDE SEQUENCE [GENOMIC DNA]</scope>
    <scope>PARTIAL PROTEIN SEQUENCE</scope>
    <source>
        <strain>ATCC 204510 / AB320</strain>
    </source>
</reference>
<reference key="2">
    <citation type="journal article" date="1994" name="Yeast">
        <title>Comparison of INO1 gene sequences and products in Candida albicans and Saccharomyces cerevisiae.</title>
        <authorList>
            <person name="Klig L.S."/>
            <person name="Zobel P.A."/>
            <person name="Devry C.G."/>
            <person name="Losberger C."/>
        </authorList>
    </citation>
    <scope>NUCLEOTIDE SEQUENCE [GENOMIC DNA]</scope>
    <source>
        <strain>AB322</strain>
    </source>
</reference>
<reference key="3">
    <citation type="journal article" date="1996" name="Yeast">
        <title>Sequence analysis of a 40.7 kb segment from the left arm of yeast chromosome X reveals 14 known genes and 13 new open reading frames including homologues of genes clustered on the right arm of chromosome XI.</title>
        <authorList>
            <person name="Katsoulou C."/>
            <person name="Tzermia M."/>
            <person name="Tavernarakis N."/>
            <person name="Alexandraki D."/>
        </authorList>
    </citation>
    <scope>NUCLEOTIDE SEQUENCE [GENOMIC DNA]</scope>
    <source>
        <strain>ATCC 96604 / S288c / FY1679</strain>
    </source>
</reference>
<reference key="4">
    <citation type="journal article" date="1996" name="EMBO J.">
        <title>Complete nucleotide sequence of Saccharomyces cerevisiae chromosome X.</title>
        <authorList>
            <person name="Galibert F."/>
            <person name="Alexandraki D."/>
            <person name="Baur A."/>
            <person name="Boles E."/>
            <person name="Chalwatzis N."/>
            <person name="Chuat J.-C."/>
            <person name="Coster F."/>
            <person name="Cziepluch C."/>
            <person name="de Haan M."/>
            <person name="Domdey H."/>
            <person name="Durand P."/>
            <person name="Entian K.-D."/>
            <person name="Gatius M."/>
            <person name="Goffeau A."/>
            <person name="Grivell L.A."/>
            <person name="Hennemann A."/>
            <person name="Herbert C.J."/>
            <person name="Heumann K."/>
            <person name="Hilger F."/>
            <person name="Hollenberg C.P."/>
            <person name="Huang M.-E."/>
            <person name="Jacq C."/>
            <person name="Jauniaux J.-C."/>
            <person name="Katsoulou C."/>
            <person name="Kirchrath L."/>
            <person name="Kleine K."/>
            <person name="Kordes E."/>
            <person name="Koetter P."/>
            <person name="Liebl S."/>
            <person name="Louis E.J."/>
            <person name="Manus V."/>
            <person name="Mewes H.-W."/>
            <person name="Miosga T."/>
            <person name="Obermaier B."/>
            <person name="Perea J."/>
            <person name="Pohl T.M."/>
            <person name="Portetelle D."/>
            <person name="Pujol A."/>
            <person name="Purnelle B."/>
            <person name="Ramezani Rad M."/>
            <person name="Rasmussen S.W."/>
            <person name="Rose M."/>
            <person name="Rossau R."/>
            <person name="Schaaff-Gerstenschlaeger I."/>
            <person name="Smits P.H.M."/>
            <person name="Scarcez T."/>
            <person name="Soriano N."/>
            <person name="To Van D."/>
            <person name="Tzermia M."/>
            <person name="Van Broekhoven A."/>
            <person name="Vandenbol M."/>
            <person name="Wedler H."/>
            <person name="von Wettstein D."/>
            <person name="Wambutt R."/>
            <person name="Zagulski M."/>
            <person name="Zollner A."/>
            <person name="Karpfinger-Hartl L."/>
        </authorList>
    </citation>
    <scope>NUCLEOTIDE SEQUENCE [LARGE SCALE GENOMIC DNA]</scope>
    <source>
        <strain>ATCC 204508 / S288c</strain>
    </source>
</reference>
<reference key="5">
    <citation type="journal article" date="2014" name="G3 (Bethesda)">
        <title>The reference genome sequence of Saccharomyces cerevisiae: Then and now.</title>
        <authorList>
            <person name="Engel S.R."/>
            <person name="Dietrich F.S."/>
            <person name="Fisk D.G."/>
            <person name="Binkley G."/>
            <person name="Balakrishnan R."/>
            <person name="Costanzo M.C."/>
            <person name="Dwight S.S."/>
            <person name="Hitz B.C."/>
            <person name="Karra K."/>
            <person name="Nash R.S."/>
            <person name="Weng S."/>
            <person name="Wong E.D."/>
            <person name="Lloyd P."/>
            <person name="Skrzypek M.S."/>
            <person name="Miyasato S.R."/>
            <person name="Simison M."/>
            <person name="Cherry J.M."/>
        </authorList>
    </citation>
    <scope>GENOME REANNOTATION</scope>
    <source>
        <strain>ATCC 204508 / S288c</strain>
    </source>
</reference>
<reference key="6">
    <citation type="journal article" date="1996" name="J. Am. Chem. Soc.">
        <title>Elaboration of a general strategy for inhibition of myo-Inositol 1-Phosphate Synthase: active site interactions of analogues possessing oxidized reaction centers.</title>
        <authorList>
            <person name="Migaud M.E."/>
            <person name="Frost J.W."/>
        </authorList>
    </citation>
    <scope>FUNCTION</scope>
    <scope>CATALYTIC ACTIVITY</scope>
    <scope>COFACTOR</scope>
    <scope>ACTIVITY REGULATION</scope>
    <scope>BIOPHYSICOCHEMICAL PROPERTIES</scope>
</reference>
<reference key="7">
    <citation type="journal article" date="1997" name="J. Bacteriol.">
        <title>Regulation of yeast phospholipid biosynthetic genes in phosphatidylserine decarboxylase mutants.</title>
        <authorList>
            <person name="Griac P."/>
        </authorList>
    </citation>
    <scope>INDUCTION</scope>
</reference>
<reference key="8">
    <citation type="journal article" date="1999" name="J. Am. Chem. Soc.">
        <title>myo-Inositol 1-phosphate synthase: does a single active-site amino acid catalyze multiple proton transfers?</title>
        <authorList>
            <person name="Tian F."/>
            <person name="Migaud M.E."/>
            <person name="Frost J.W."/>
        </authorList>
    </citation>
    <scope>FUNCTION</scope>
    <scope>CATALYTIC ACTIVITY</scope>
    <scope>ACTIVITY REGULATION</scope>
</reference>
<reference key="9">
    <citation type="journal article" date="2003" name="Nature">
        <title>Global analysis of protein localization in budding yeast.</title>
        <authorList>
            <person name="Huh W.-K."/>
            <person name="Falvo J.V."/>
            <person name="Gerke L.C."/>
            <person name="Carroll A.S."/>
            <person name="Howson R.W."/>
            <person name="Weissman J.S."/>
            <person name="O'Shea E.K."/>
        </authorList>
    </citation>
    <scope>SUBCELLULAR LOCATION [LARGE SCALE ANALYSIS]</scope>
</reference>
<reference key="10">
    <citation type="journal article" date="2004" name="Biol. Psychiatry">
        <title>Valproate decreases inositol biosynthesis.</title>
        <authorList>
            <person name="Shaltiel G."/>
            <person name="Shamir A."/>
            <person name="Shapiro J."/>
            <person name="Ding D."/>
            <person name="Dalton E."/>
            <person name="Bialer M."/>
            <person name="Harwood A.J."/>
            <person name="Belmaker R.H."/>
            <person name="Greenberg M.L."/>
            <person name="Agam G."/>
        </authorList>
    </citation>
    <scope>INDUCTION</scope>
</reference>
<reference key="11">
    <citation type="journal article" date="2009" name="Science">
        <title>Global analysis of Cdk1 substrate phosphorylation sites provides insights into evolution.</title>
        <authorList>
            <person name="Holt L.J."/>
            <person name="Tuch B.B."/>
            <person name="Villen J."/>
            <person name="Johnson A.D."/>
            <person name="Gygi S.P."/>
            <person name="Morgan D.O."/>
        </authorList>
    </citation>
    <scope>PHOSPHORYLATION [LARGE SCALE ANALYSIS] AT SER-368</scope>
    <scope>IDENTIFICATION BY MASS SPECTROMETRY [LARGE SCALE ANALYSIS]</scope>
</reference>
<reference key="12">
    <citation type="journal article" date="2013" name="J. Biol. Chem.">
        <title>Phosphorylation regulates myo-inositol-3-phosphate synthase: a novel regulatory mechanism of inositol biosynthesis.</title>
        <authorList>
            <person name="Deranieh R.M."/>
            <person name="He Q."/>
            <person name="Caruso J.A."/>
            <person name="Greenberg M.L."/>
        </authorList>
    </citation>
    <scope>FUNCTION</scope>
    <scope>CATALYTIC ACTIVITY</scope>
    <scope>IDENTIFICATION BY MASS SPECTROMETRY</scope>
    <scope>DISRUPTION PHENOTYPE</scope>
    <scope>PHOSPHORYLATION AT THR-48; SER-177; SER-184; SER-296 AND SER-374</scope>
    <scope>MUTAGENESIS OF SER-184; SER-296 AND SER-374</scope>
</reference>
<reference evidence="18" key="13">
    <citation type="journal article" date="2002" name="J. Struct. Funct. Genomics">
        <title>Structural analysis of Saccharomyces cerevisiae myo-inositol phosphate synthase.</title>
        <authorList>
            <person name="Kniewel R."/>
            <person name="Buglino J.A."/>
            <person name="Shen V."/>
            <person name="Chadha T."/>
            <person name="Beckwith A."/>
            <person name="Lima C.D."/>
        </authorList>
    </citation>
    <scope>X-RAY CRYSTALLOGRAPHY (2.65 ANGSTROMS) IN COMPLEX WITH NAD(+)</scope>
    <scope>COFACTOR</scope>
    <scope>SUBUNIT</scope>
</reference>
<reference evidence="16 17" key="14">
    <citation type="journal article" date="2002" name="J. Biol. Chem.">
        <title>The crystal structure and mechanism of 1-L-myo-inositol- 1-phosphate synthase.</title>
        <authorList>
            <person name="Stein A.J."/>
            <person name="Geiger J.H."/>
        </authorList>
    </citation>
    <scope>X-RAY CRYSTALLOGRAPHY (2.20 ANGSTROMS) IN COMPLEX WITH NADH AND INHIBITOR</scope>
    <scope>COFACTOR</scope>
    <scope>ACTIVITY REGULATION</scope>
    <scope>SUBUNIT</scope>
</reference>
<reference evidence="19 20 21 22 23" key="15">
    <citation type="journal article" date="2003" name="Acta Crystallogr.">
        <title>Structures of NAD(+)- and NADH-bound 1-l-myo-inositol 1-phosphate synthase.</title>
        <authorList>
            <person name="Jin X."/>
            <person name="Geiger J.H."/>
        </authorList>
    </citation>
    <scope>X-RAY CRYSTALLOGRAPHY (1.70 ANGSTROMS) IN COMPLEX WITH NADH</scope>
    <scope>COFACTOR</scope>
</reference>
<reference evidence="24" key="16">
    <citation type="journal article" date="2004" name="J. Biol. Chem.">
        <title>The structure of the 1L-myo-inositol-1-phosphate synthase-NAD+-2-deoxy-D-glucitol 6-(E)-vinylhomophosphonate complex demands a revision of the enzyme mechanism.</title>
        <authorList>
            <person name="Jin X."/>
            <person name="Foley K.M."/>
            <person name="Geiger J.H."/>
        </authorList>
    </citation>
    <scope>X-RAY CRYSTALLOGRAPHY (2.05 ANGSTROMS) IN COMPLEX WITH NADH AND INHIBITOR</scope>
    <scope>FUNCTION</scope>
    <scope>CATALYTIC ACTIVITY</scope>
    <scope>COFACTOR</scope>
    <scope>BIOPHYSICOCHEMICAL PROPERTIES</scope>
    <scope>MUTAGENESIS OF LYS-369; LYS-412 AND LYS-489</scope>
</reference>
<name>INO1_YEAST</name>
<organism>
    <name type="scientific">Saccharomyces cerevisiae (strain ATCC 204508 / S288c)</name>
    <name type="common">Baker's yeast</name>
    <dbReference type="NCBI Taxonomy" id="559292"/>
    <lineage>
        <taxon>Eukaryota</taxon>
        <taxon>Fungi</taxon>
        <taxon>Dikarya</taxon>
        <taxon>Ascomycota</taxon>
        <taxon>Saccharomycotina</taxon>
        <taxon>Saccharomycetes</taxon>
        <taxon>Saccharomycetales</taxon>
        <taxon>Saccharomycetaceae</taxon>
        <taxon>Saccharomyces</taxon>
    </lineage>
</organism>
<feature type="chain" id="PRO_0000195185" description="Inositol-3-phosphate synthase">
    <location>
        <begin position="1"/>
        <end position="533"/>
    </location>
</feature>
<feature type="binding site" evidence="2 4 16 18">
    <location>
        <position position="74"/>
    </location>
    <ligand>
        <name>NAD(+)</name>
        <dbReference type="ChEBI" id="CHEBI:57540"/>
    </ligand>
</feature>
<feature type="binding site" evidence="2 3 4 6 16 18 20 21 22 24">
    <location>
        <position position="75"/>
    </location>
    <ligand>
        <name>NAD(+)</name>
        <dbReference type="ChEBI" id="CHEBI:57540"/>
    </ligand>
</feature>
<feature type="binding site" evidence="2 3 4 6 16 17 18 20 21 22 23 24">
    <location>
        <position position="76"/>
    </location>
    <ligand>
        <name>NAD(+)</name>
        <dbReference type="ChEBI" id="CHEBI:57540"/>
    </ligand>
</feature>
<feature type="binding site" evidence="2 3 4 6 16 17 18 20 21 22 23 24">
    <location>
        <position position="77"/>
    </location>
    <ligand>
        <name>NAD(+)</name>
        <dbReference type="ChEBI" id="CHEBI:57540"/>
    </ligand>
</feature>
<feature type="binding site" evidence="2 3 4 6 16 17 18 20 21 22 23 24">
    <location>
        <position position="148"/>
    </location>
    <ligand>
        <name>NAD(+)</name>
        <dbReference type="ChEBI" id="CHEBI:57540"/>
    </ligand>
</feature>
<feature type="binding site" evidence="2 3 6 16 17 18 20 21 22 23 24">
    <location>
        <position position="184"/>
    </location>
    <ligand>
        <name>NAD(+)</name>
        <dbReference type="ChEBI" id="CHEBI:57540"/>
    </ligand>
</feature>
<feature type="binding site" evidence="3 4 6 17 18 20 21 22 23 24">
    <location>
        <position position="185"/>
    </location>
    <ligand>
        <name>NAD(+)</name>
        <dbReference type="ChEBI" id="CHEBI:57540"/>
    </ligand>
</feature>
<feature type="binding site" evidence="2 16">
    <location>
        <position position="195"/>
    </location>
    <ligand>
        <name>NAD(+)</name>
        <dbReference type="ChEBI" id="CHEBI:57540"/>
    </ligand>
</feature>
<feature type="binding site" evidence="2 16">
    <location>
        <position position="196"/>
    </location>
    <ligand>
        <name>NAD(+)</name>
        <dbReference type="ChEBI" id="CHEBI:57540"/>
    </ligand>
</feature>
<feature type="binding site" evidence="3 4 6 17 18 20 21 22 23 24">
    <location>
        <position position="198"/>
    </location>
    <ligand>
        <name>NAD(+)</name>
        <dbReference type="ChEBI" id="CHEBI:57540"/>
    </ligand>
</feature>
<feature type="binding site" evidence="4 18">
    <location>
        <position position="244"/>
    </location>
    <ligand>
        <name>NAD(+)</name>
        <dbReference type="ChEBI" id="CHEBI:57540"/>
    </ligand>
</feature>
<feature type="binding site" evidence="2 3 4 6 16 17 18 20 21 22 23 24">
    <location>
        <position position="245"/>
    </location>
    <ligand>
        <name>NAD(+)</name>
        <dbReference type="ChEBI" id="CHEBI:57540"/>
    </ligand>
</feature>
<feature type="binding site" evidence="2 3 6 16 17 20 21 23 24">
    <location>
        <position position="246"/>
    </location>
    <ligand>
        <name>NAD(+)</name>
        <dbReference type="ChEBI" id="CHEBI:57540"/>
    </ligand>
</feature>
<feature type="binding site" evidence="2 3 4 6 16 17 18 20 21 22 23 24">
    <location>
        <position position="247"/>
    </location>
    <ligand>
        <name>NAD(+)</name>
        <dbReference type="ChEBI" id="CHEBI:57540"/>
    </ligand>
</feature>
<feature type="binding site" evidence="2 3 17 20">
    <location>
        <position position="295"/>
    </location>
    <ligand>
        <name>NAD(+)</name>
        <dbReference type="ChEBI" id="CHEBI:57540"/>
    </ligand>
</feature>
<feature type="binding site" evidence="2 3 4 6 17 18 20 21 22 23 24">
    <location>
        <position position="296"/>
    </location>
    <ligand>
        <name>NAD(+)</name>
        <dbReference type="ChEBI" id="CHEBI:57540"/>
    </ligand>
</feature>
<feature type="binding site" evidence="2 3 16 20">
    <location>
        <position position="320"/>
    </location>
    <ligand>
        <name>NAD(+)</name>
        <dbReference type="ChEBI" id="CHEBI:57540"/>
    </ligand>
</feature>
<feature type="binding site" evidence="2 16">
    <location>
        <position position="321"/>
    </location>
    <ligand>
        <name>NAD(+)</name>
        <dbReference type="ChEBI" id="CHEBI:57540"/>
    </ligand>
</feature>
<feature type="binding site" evidence="2 3 16 22">
    <location>
        <position position="323"/>
    </location>
    <ligand>
        <name>NAD(+)</name>
        <dbReference type="ChEBI" id="CHEBI:57540"/>
    </ligand>
</feature>
<feature type="binding site" evidence="3 4 18 20">
    <location>
        <position position="354"/>
    </location>
    <ligand>
        <name>NAD(+)</name>
        <dbReference type="ChEBI" id="CHEBI:57540"/>
    </ligand>
</feature>
<feature type="binding site" evidence="2 3 4 6 17 18 20 21 22 23 24">
    <location>
        <position position="355"/>
    </location>
    <ligand>
        <name>NAD(+)</name>
        <dbReference type="ChEBI" id="CHEBI:57540"/>
    </ligand>
</feature>
<feature type="binding site" evidence="2 3 4 6 17 18 20 22 23 24">
    <location>
        <position position="356"/>
    </location>
    <ligand>
        <name>NAD(+)</name>
        <dbReference type="ChEBI" id="CHEBI:57540"/>
    </ligand>
</feature>
<feature type="binding site" evidence="3 6 20 22 23 24">
    <location>
        <position position="369"/>
    </location>
    <ligand>
        <name>NAD(+)</name>
        <dbReference type="ChEBI" id="CHEBI:57540"/>
    </ligand>
</feature>
<feature type="binding site" evidence="2 16">
    <location>
        <position position="409"/>
    </location>
    <ligand>
        <name>NAD(+)</name>
        <dbReference type="ChEBI" id="CHEBI:57540"/>
    </ligand>
</feature>
<feature type="binding site" evidence="2 17">
    <location>
        <position position="410"/>
    </location>
    <ligand>
        <name>NAD(+)</name>
        <dbReference type="ChEBI" id="CHEBI:57540"/>
    </ligand>
</feature>
<feature type="binding site" evidence="3 4 6 18 20 22 23 24">
    <location>
        <position position="438"/>
    </location>
    <ligand>
        <name>NAD(+)</name>
        <dbReference type="ChEBI" id="CHEBI:57540"/>
    </ligand>
</feature>
<feature type="binding site" evidence="2 3 17 20 23">
    <location>
        <position position="439"/>
    </location>
    <ligand>
        <name>NAD(+)</name>
        <dbReference type="ChEBI" id="CHEBI:57540"/>
    </ligand>
</feature>
<feature type="modified residue" description="Phosphothreonine" evidence="8">
    <location>
        <position position="48"/>
    </location>
</feature>
<feature type="modified residue" description="Phosphoserine" evidence="8">
    <location>
        <position position="177"/>
    </location>
</feature>
<feature type="modified residue" description="Phosphoserine" evidence="8">
    <location>
        <position position="184"/>
    </location>
</feature>
<feature type="modified residue" description="Phosphoserine" evidence="8">
    <location>
        <position position="296"/>
    </location>
</feature>
<feature type="modified residue" description="Phosphoserine" evidence="25">
    <location>
        <position position="368"/>
    </location>
</feature>
<feature type="modified residue" description="Phosphoserine" evidence="15">
    <location>
        <position position="374"/>
    </location>
</feature>
<feature type="mutagenesis site" description="Decreases activity. Inositol auxotrophy." evidence="8">
    <original>S</original>
    <variation>D</variation>
    <location>
        <position position="184"/>
    </location>
</feature>
<feature type="mutagenesis site" description="Decreases activity. Inositol auxotrophy." evidence="8">
    <original>S</original>
    <variation>A</variation>
    <variation>D</variation>
    <location>
        <position position="296"/>
    </location>
</feature>
<feature type="mutagenesis site" description="Loss of activity." evidence="6">
    <original>K</original>
    <variation>A</variation>
    <location>
        <position position="369"/>
    </location>
</feature>
<feature type="mutagenesis site" description="Decreases activity. Inositol auxotrophy." evidence="8">
    <original>S</original>
    <variation>D</variation>
    <location>
        <position position="374"/>
    </location>
</feature>
<feature type="mutagenesis site" description="Loss of activity." evidence="6">
    <original>K</original>
    <variation>A</variation>
    <location>
        <position position="412"/>
    </location>
</feature>
<feature type="mutagenesis site" description="Loss of activity." evidence="6">
    <original>K</original>
    <variation>A</variation>
    <location>
        <position position="489"/>
    </location>
</feature>
<feature type="sequence conflict" description="In Ref. 1 and 2." evidence="13" ref="1 2">
    <original>V</original>
    <variation>RL</variation>
    <location>
        <position position="14"/>
    </location>
</feature>
<feature type="sequence conflict" description="In Ref. 1 and 2." evidence="13" ref="1 2">
    <original>L</original>
    <variation>FE</variation>
    <location>
        <position position="60"/>
    </location>
</feature>
<feature type="sequence conflict" description="In Ref. 1 and 2." evidence="13" ref="1 2">
    <original>LGIMLIGLGGNNGSTLVASVLANKHNVE</original>
    <variation>TRNYAHWVRWLQQWLTLWPRYWRISTMWS</variation>
    <location>
        <begin position="66"/>
        <end position="93"/>
    </location>
</feature>
<feature type="sequence conflict" description="In Ref. 1 and 2." evidence="13" ref="1 2">
    <original>E</original>
    <variation>AK</variation>
    <location>
        <position position="98"/>
    </location>
</feature>
<feature type="sequence conflict" description="In Ref. 1 and 2." evidence="13" ref="1 2">
    <original>ND</original>
    <variation>KH</variation>
    <location>
        <begin position="140"/>
        <end position="141"/>
    </location>
</feature>
<feature type="sequence conflict" description="In Ref. 1 and 2." evidence="13" ref="1 2">
    <original>N</original>
    <variation>Q</variation>
    <location>
        <position position="201"/>
    </location>
</feature>
<feature type="sequence conflict" description="In Ref. 1 and 2." evidence="13" ref="1 2">
    <original>P</original>
    <variation>A</variation>
    <location>
        <position position="444"/>
    </location>
</feature>
<feature type="sequence conflict" description="In Ref. 1; AAA66310." evidence="13" ref="1">
    <original>NFYPVLTFLSYWLKAPLTRPGF</original>
    <variation>ELLSSFNLLELLVKSSINKNQDL</variation>
    <location>
        <begin position="476"/>
        <end position="497"/>
    </location>
</feature>
<feature type="sequence conflict" description="In Ref. 1; AAA34706." evidence="13" ref="1">
    <original>NELRFEERLL</original>
    <variation>KRTKIRREIVVISFQRLSFSFSAYL</variation>
    <location>
        <begin position="524"/>
        <end position="533"/>
    </location>
</feature>
<feature type="strand" evidence="28">
    <location>
        <begin position="11"/>
        <end position="14"/>
    </location>
</feature>
<feature type="strand" evidence="28">
    <location>
        <begin position="19"/>
        <end position="22"/>
    </location>
</feature>
<feature type="strand" evidence="28">
    <location>
        <begin position="25"/>
        <end position="39"/>
    </location>
</feature>
<feature type="strand" evidence="28">
    <location>
        <begin position="43"/>
        <end position="59"/>
    </location>
</feature>
<feature type="strand" evidence="28">
    <location>
        <begin position="64"/>
        <end position="71"/>
    </location>
</feature>
<feature type="turn" evidence="28">
    <location>
        <begin position="72"/>
        <end position="74"/>
    </location>
</feature>
<feature type="helix" evidence="28">
    <location>
        <begin position="76"/>
        <end position="89"/>
    </location>
</feature>
<feature type="strand" evidence="28">
    <location>
        <begin position="94"/>
        <end position="96"/>
    </location>
</feature>
<feature type="strand" evidence="28">
    <location>
        <begin position="99"/>
        <end position="101"/>
    </location>
</feature>
<feature type="helix" evidence="28">
    <location>
        <begin position="109"/>
        <end position="112"/>
    </location>
</feature>
<feature type="strand" evidence="28">
    <location>
        <begin position="114"/>
        <end position="119"/>
    </location>
</feature>
<feature type="strand" evidence="27">
    <location>
        <begin position="121"/>
        <end position="123"/>
    </location>
</feature>
<feature type="strand" evidence="28">
    <location>
        <begin position="125"/>
        <end position="129"/>
    </location>
</feature>
<feature type="helix" evidence="28">
    <location>
        <begin position="130"/>
        <end position="132"/>
    </location>
</feature>
<feature type="helix" evidence="28">
    <location>
        <begin position="139"/>
        <end position="141"/>
    </location>
</feature>
<feature type="strand" evidence="28">
    <location>
        <begin position="142"/>
        <end position="147"/>
    </location>
</feature>
<feature type="helix" evidence="28">
    <location>
        <begin position="154"/>
        <end position="161"/>
    </location>
</feature>
<feature type="helix" evidence="28">
    <location>
        <begin position="166"/>
        <end position="176"/>
    </location>
</feature>
<feature type="helix" evidence="28">
    <location>
        <begin position="188"/>
        <end position="190"/>
    </location>
</feature>
<feature type="helix" evidence="28">
    <location>
        <begin position="193"/>
        <end position="198"/>
    </location>
</feature>
<feature type="strand" evidence="26">
    <location>
        <begin position="207"/>
        <end position="209"/>
    </location>
</feature>
<feature type="helix" evidence="28">
    <location>
        <begin position="216"/>
        <end position="233"/>
    </location>
</feature>
<feature type="strand" evidence="28">
    <location>
        <begin position="239"/>
        <end position="243"/>
    </location>
</feature>
<feature type="turn" evidence="28">
    <location>
        <begin position="255"/>
        <end position="257"/>
    </location>
</feature>
<feature type="strand" evidence="28">
    <location>
        <begin position="258"/>
        <end position="260"/>
    </location>
</feature>
<feature type="helix" evidence="28">
    <location>
        <begin position="261"/>
        <end position="269"/>
    </location>
</feature>
<feature type="helix" evidence="28">
    <location>
        <begin position="277"/>
        <end position="287"/>
    </location>
</feature>
<feature type="strand" evidence="28">
    <location>
        <begin position="292"/>
        <end position="294"/>
    </location>
</feature>
<feature type="strand" evidence="27">
    <location>
        <begin position="296"/>
        <end position="298"/>
    </location>
</feature>
<feature type="helix" evidence="28">
    <location>
        <begin position="303"/>
        <end position="312"/>
    </location>
</feature>
<feature type="strand" evidence="28">
    <location>
        <begin position="316"/>
        <end position="321"/>
    </location>
</feature>
<feature type="helix" evidence="28">
    <location>
        <begin position="325"/>
        <end position="338"/>
    </location>
</feature>
<feature type="strand" evidence="28">
    <location>
        <begin position="342"/>
        <end position="352"/>
    </location>
</feature>
<feature type="helix" evidence="28">
    <location>
        <begin position="355"/>
        <end position="360"/>
    </location>
</feature>
<feature type="helix" evidence="28">
    <location>
        <begin position="363"/>
        <end position="375"/>
    </location>
</feature>
<feature type="helix" evidence="28">
    <location>
        <begin position="378"/>
        <end position="382"/>
    </location>
</feature>
<feature type="turn" evidence="28">
    <location>
        <begin position="385"/>
        <end position="387"/>
    </location>
</feature>
<feature type="turn" evidence="28">
    <location>
        <begin position="390"/>
        <end position="392"/>
    </location>
</feature>
<feature type="strand" evidence="28">
    <location>
        <begin position="397"/>
        <end position="404"/>
    </location>
</feature>
<feature type="helix" evidence="28">
    <location>
        <begin position="406"/>
        <end position="408"/>
    </location>
</feature>
<feature type="strand" evidence="28">
    <location>
        <begin position="411"/>
        <end position="421"/>
    </location>
</feature>
<feature type="helix" evidence="28">
    <location>
        <begin position="423"/>
        <end position="425"/>
    </location>
</feature>
<feature type="strand" evidence="28">
    <location>
        <begin position="427"/>
        <end position="437"/>
    </location>
</feature>
<feature type="helix" evidence="28">
    <location>
        <begin position="438"/>
        <end position="457"/>
    </location>
</feature>
<feature type="strand" evidence="28">
    <location>
        <begin position="459"/>
        <end position="463"/>
    </location>
</feature>
<feature type="strand" evidence="27">
    <location>
        <begin position="466"/>
        <end position="468"/>
    </location>
</feature>
<feature type="helix" evidence="28">
    <location>
        <begin position="482"/>
        <end position="487"/>
    </location>
</feature>
<feature type="strand" evidence="28">
    <location>
        <begin position="488"/>
        <end position="490"/>
    </location>
</feature>
<feature type="helix" evidence="28">
    <location>
        <begin position="503"/>
        <end position="517"/>
    </location>
</feature>
<feature type="helix" evidence="28">
    <location>
        <begin position="528"/>
        <end position="531"/>
    </location>
</feature>
<protein>
    <recommendedName>
        <fullName>Inositol-3-phosphate synthase</fullName>
        <shortName evidence="12">MIP synthase</shortName>
        <ecNumber evidence="6 8 10 11">5.5.1.4</ecNumber>
    </recommendedName>
    <alternativeName>
        <fullName>Myo-inositol 1-phosphate synthase</fullName>
        <shortName>IPS</shortName>
        <shortName>MI-1-P synthase</shortName>
    </alternativeName>
</protein>
<evidence type="ECO:0000250" key="1">
    <source>
        <dbReference type="UniProtKB" id="Q9NPH2"/>
    </source>
</evidence>
<evidence type="ECO:0000269" key="2">
    <source>
    </source>
</evidence>
<evidence type="ECO:0000269" key="3">
    <source>
    </source>
</evidence>
<evidence type="ECO:0000269" key="4">
    <source>
    </source>
</evidence>
<evidence type="ECO:0000269" key="5">
    <source>
    </source>
</evidence>
<evidence type="ECO:0000269" key="6">
    <source>
    </source>
</evidence>
<evidence type="ECO:0000269" key="7">
    <source>
    </source>
</evidence>
<evidence type="ECO:0000269" key="8">
    <source>
    </source>
</evidence>
<evidence type="ECO:0000269" key="9">
    <source>
    </source>
</evidence>
<evidence type="ECO:0000269" key="10">
    <source ref="6"/>
</evidence>
<evidence type="ECO:0000269" key="11">
    <source ref="8"/>
</evidence>
<evidence type="ECO:0000303" key="12">
    <source>
    </source>
</evidence>
<evidence type="ECO:0000305" key="13"/>
<evidence type="ECO:0000305" key="14">
    <source>
    </source>
</evidence>
<evidence type="ECO:0000305" key="15">
    <source>
    </source>
</evidence>
<evidence type="ECO:0007744" key="16">
    <source>
        <dbReference type="PDB" id="1JKF"/>
    </source>
</evidence>
<evidence type="ECO:0007744" key="17">
    <source>
        <dbReference type="PDB" id="1JKI"/>
    </source>
</evidence>
<evidence type="ECO:0007744" key="18">
    <source>
        <dbReference type="PDB" id="1LA2"/>
    </source>
</evidence>
<evidence type="ECO:0007744" key="19">
    <source>
        <dbReference type="PDB" id="1P1F"/>
    </source>
</evidence>
<evidence type="ECO:0007744" key="20">
    <source>
        <dbReference type="PDB" id="1P1H"/>
    </source>
</evidence>
<evidence type="ECO:0007744" key="21">
    <source>
        <dbReference type="PDB" id="1P1I"/>
    </source>
</evidence>
<evidence type="ECO:0007744" key="22">
    <source>
        <dbReference type="PDB" id="1P1J"/>
    </source>
</evidence>
<evidence type="ECO:0007744" key="23">
    <source>
        <dbReference type="PDB" id="1P1K"/>
    </source>
</evidence>
<evidence type="ECO:0007744" key="24">
    <source>
        <dbReference type="PDB" id="1RM0"/>
    </source>
</evidence>
<evidence type="ECO:0007744" key="25">
    <source>
    </source>
</evidence>
<evidence type="ECO:0007829" key="26">
    <source>
        <dbReference type="PDB" id="1JKI"/>
    </source>
</evidence>
<evidence type="ECO:0007829" key="27">
    <source>
        <dbReference type="PDB" id="1P1H"/>
    </source>
</evidence>
<evidence type="ECO:0007829" key="28">
    <source>
        <dbReference type="PDB" id="1P1J"/>
    </source>
</evidence>